<reference key="1">
    <citation type="journal article" date="2007" name="PLoS Genet.">
        <title>Patterns and implications of gene gain and loss in the evolution of Prochlorococcus.</title>
        <authorList>
            <person name="Kettler G.C."/>
            <person name="Martiny A.C."/>
            <person name="Huang K."/>
            <person name="Zucker J."/>
            <person name="Coleman M.L."/>
            <person name="Rodrigue S."/>
            <person name="Chen F."/>
            <person name="Lapidus A."/>
            <person name="Ferriera S."/>
            <person name="Johnson J."/>
            <person name="Steglich C."/>
            <person name="Church G.M."/>
            <person name="Richardson P."/>
            <person name="Chisholm S.W."/>
        </authorList>
    </citation>
    <scope>NUCLEOTIDE SEQUENCE [LARGE SCALE GENOMIC DNA]</scope>
    <source>
        <strain>MIT 9303</strain>
    </source>
</reference>
<gene>
    <name evidence="1" type="primary">ndhK</name>
    <name type="ordered locus">P9303_25251</name>
</gene>
<name>NDHK_PROM3</name>
<protein>
    <recommendedName>
        <fullName evidence="1">NAD(P)H-quinone oxidoreductase subunit K</fullName>
        <ecNumber evidence="1">7.1.1.-</ecNumber>
    </recommendedName>
    <alternativeName>
        <fullName evidence="1">NAD(P)H dehydrogenase I subunit K</fullName>
    </alternativeName>
    <alternativeName>
        <fullName evidence="1">NDH-1 subunit K</fullName>
        <shortName evidence="1">NDH-K</shortName>
    </alternativeName>
</protein>
<sequence>MSVTPSIDAVRDLRAASCGPVGAPSVTSELSENIILTSLDDLHNWARLSSLWPLLYGTACCFIEFAALIGSRFDFDRFGLVPRSSPRQADLLIVAGTVTMKMAPALVRLYEQMPEPKYVIAMGACTITGGMFSADSTTAVRGVDKLIPVDLYLPGCPPRPEAIFDAVIKLRKKVGDESVSERIKIAQTHRYFTVPHQMKRVEPIVTGAYLSADTQKAALSPGAGLPMAAELNTSEIDASPASQPSSTYES</sequence>
<evidence type="ECO:0000255" key="1">
    <source>
        <dbReference type="HAMAP-Rule" id="MF_01356"/>
    </source>
</evidence>
<evidence type="ECO:0000256" key="2">
    <source>
        <dbReference type="SAM" id="MobiDB-lite"/>
    </source>
</evidence>
<accession>A2CCP6</accession>
<comment type="function">
    <text evidence="1">NDH-1 shuttles electrons from an unknown electron donor, via FMN and iron-sulfur (Fe-S) centers, to quinones in the respiratory and/or the photosynthetic chain. The immediate electron acceptor for the enzyme in this species is believed to be plastoquinone. Couples the redox reaction to proton translocation, and thus conserves the redox energy in a proton gradient. Cyanobacterial NDH-1 also plays a role in inorganic carbon-concentration.</text>
</comment>
<comment type="catalytic activity">
    <reaction evidence="1">
        <text>a plastoquinone + NADH + (n+1) H(+)(in) = a plastoquinol + NAD(+) + n H(+)(out)</text>
        <dbReference type="Rhea" id="RHEA:42608"/>
        <dbReference type="Rhea" id="RHEA-COMP:9561"/>
        <dbReference type="Rhea" id="RHEA-COMP:9562"/>
        <dbReference type="ChEBI" id="CHEBI:15378"/>
        <dbReference type="ChEBI" id="CHEBI:17757"/>
        <dbReference type="ChEBI" id="CHEBI:57540"/>
        <dbReference type="ChEBI" id="CHEBI:57945"/>
        <dbReference type="ChEBI" id="CHEBI:62192"/>
    </reaction>
</comment>
<comment type="catalytic activity">
    <reaction evidence="1">
        <text>a plastoquinone + NADPH + (n+1) H(+)(in) = a plastoquinol + NADP(+) + n H(+)(out)</text>
        <dbReference type="Rhea" id="RHEA:42612"/>
        <dbReference type="Rhea" id="RHEA-COMP:9561"/>
        <dbReference type="Rhea" id="RHEA-COMP:9562"/>
        <dbReference type="ChEBI" id="CHEBI:15378"/>
        <dbReference type="ChEBI" id="CHEBI:17757"/>
        <dbReference type="ChEBI" id="CHEBI:57783"/>
        <dbReference type="ChEBI" id="CHEBI:58349"/>
        <dbReference type="ChEBI" id="CHEBI:62192"/>
    </reaction>
</comment>
<comment type="cofactor">
    <cofactor evidence="1">
        <name>[4Fe-4S] cluster</name>
        <dbReference type="ChEBI" id="CHEBI:49883"/>
    </cofactor>
    <text evidence="1">Binds 1 [4Fe-4S] cluster.</text>
</comment>
<comment type="subunit">
    <text evidence="1">NDH-1 can be composed of about 15 different subunits; different subcomplexes with different compositions have been identified which probably have different functions.</text>
</comment>
<comment type="subcellular location">
    <subcellularLocation>
        <location evidence="1">Cellular thylakoid membrane</location>
        <topology evidence="1">Peripheral membrane protein</topology>
        <orientation evidence="1">Cytoplasmic side</orientation>
    </subcellularLocation>
</comment>
<comment type="similarity">
    <text evidence="1">Belongs to the complex I 20 kDa subunit family.</text>
</comment>
<proteinExistence type="inferred from homology"/>
<keyword id="KW-0004">4Fe-4S</keyword>
<keyword id="KW-0408">Iron</keyword>
<keyword id="KW-0411">Iron-sulfur</keyword>
<keyword id="KW-0472">Membrane</keyword>
<keyword id="KW-0479">Metal-binding</keyword>
<keyword id="KW-0520">NAD</keyword>
<keyword id="KW-0521">NADP</keyword>
<keyword id="KW-0618">Plastoquinone</keyword>
<keyword id="KW-0874">Quinone</keyword>
<keyword id="KW-0793">Thylakoid</keyword>
<keyword id="KW-1278">Translocase</keyword>
<keyword id="KW-0813">Transport</keyword>
<dbReference type="EC" id="7.1.1.-" evidence="1"/>
<dbReference type="EMBL" id="CP000554">
    <property type="protein sequence ID" value="ABM79256.1"/>
    <property type="molecule type" value="Genomic_DNA"/>
</dbReference>
<dbReference type="RefSeq" id="WP_011827102.1">
    <property type="nucleotide sequence ID" value="NC_008820.1"/>
</dbReference>
<dbReference type="SMR" id="A2CCP6"/>
<dbReference type="STRING" id="59922.P9303_25251"/>
<dbReference type="KEGG" id="pmf:P9303_25251"/>
<dbReference type="HOGENOM" id="CLU_055737_2_0_3"/>
<dbReference type="BioCyc" id="PMAR59922:G1G80-2216-MONOMER"/>
<dbReference type="Proteomes" id="UP000002274">
    <property type="component" value="Chromosome"/>
</dbReference>
<dbReference type="GO" id="GO:0031676">
    <property type="term" value="C:plasma membrane-derived thylakoid membrane"/>
    <property type="evidence" value="ECO:0007669"/>
    <property type="project" value="UniProtKB-SubCell"/>
</dbReference>
<dbReference type="GO" id="GO:0045271">
    <property type="term" value="C:respiratory chain complex I"/>
    <property type="evidence" value="ECO:0007669"/>
    <property type="project" value="TreeGrafter"/>
</dbReference>
<dbReference type="GO" id="GO:0051539">
    <property type="term" value="F:4 iron, 4 sulfur cluster binding"/>
    <property type="evidence" value="ECO:0007669"/>
    <property type="project" value="UniProtKB-KW"/>
</dbReference>
<dbReference type="GO" id="GO:0005506">
    <property type="term" value="F:iron ion binding"/>
    <property type="evidence" value="ECO:0007669"/>
    <property type="project" value="UniProtKB-UniRule"/>
</dbReference>
<dbReference type="GO" id="GO:0008137">
    <property type="term" value="F:NADH dehydrogenase (ubiquinone) activity"/>
    <property type="evidence" value="ECO:0007669"/>
    <property type="project" value="InterPro"/>
</dbReference>
<dbReference type="GO" id="GO:0048038">
    <property type="term" value="F:quinone binding"/>
    <property type="evidence" value="ECO:0007669"/>
    <property type="project" value="UniProtKB-KW"/>
</dbReference>
<dbReference type="GO" id="GO:0009060">
    <property type="term" value="P:aerobic respiration"/>
    <property type="evidence" value="ECO:0007669"/>
    <property type="project" value="TreeGrafter"/>
</dbReference>
<dbReference type="GO" id="GO:0015990">
    <property type="term" value="P:electron transport coupled proton transport"/>
    <property type="evidence" value="ECO:0007669"/>
    <property type="project" value="TreeGrafter"/>
</dbReference>
<dbReference type="GO" id="GO:0019684">
    <property type="term" value="P:photosynthesis, light reaction"/>
    <property type="evidence" value="ECO:0007669"/>
    <property type="project" value="UniProtKB-UniRule"/>
</dbReference>
<dbReference type="FunFam" id="3.40.50.12280:FF:000003">
    <property type="entry name" value="NAD(P)H-quinone oxidoreductase subunit K, chloroplastic"/>
    <property type="match status" value="1"/>
</dbReference>
<dbReference type="Gene3D" id="3.40.50.12280">
    <property type="match status" value="1"/>
</dbReference>
<dbReference type="HAMAP" id="MF_01356">
    <property type="entry name" value="NDH1_NuoB"/>
    <property type="match status" value="1"/>
</dbReference>
<dbReference type="InterPro" id="IPR006137">
    <property type="entry name" value="NADH_UbQ_OxRdtase-like_20kDa"/>
</dbReference>
<dbReference type="InterPro" id="IPR006138">
    <property type="entry name" value="NADH_UQ_OxRdtase_20Kd_su"/>
</dbReference>
<dbReference type="NCBIfam" id="TIGR01957">
    <property type="entry name" value="nuoB_fam"/>
    <property type="match status" value="1"/>
</dbReference>
<dbReference type="NCBIfam" id="NF005012">
    <property type="entry name" value="PRK06411.1"/>
    <property type="match status" value="1"/>
</dbReference>
<dbReference type="PANTHER" id="PTHR11995">
    <property type="entry name" value="NADH DEHYDROGENASE"/>
    <property type="match status" value="1"/>
</dbReference>
<dbReference type="PANTHER" id="PTHR11995:SF14">
    <property type="entry name" value="NADH DEHYDROGENASE [UBIQUINONE] IRON-SULFUR PROTEIN 7, MITOCHONDRIAL"/>
    <property type="match status" value="1"/>
</dbReference>
<dbReference type="Pfam" id="PF01058">
    <property type="entry name" value="Oxidored_q6"/>
    <property type="match status" value="1"/>
</dbReference>
<dbReference type="SUPFAM" id="SSF56770">
    <property type="entry name" value="HydA/Nqo6-like"/>
    <property type="match status" value="1"/>
</dbReference>
<dbReference type="PROSITE" id="PS01150">
    <property type="entry name" value="COMPLEX1_20K"/>
    <property type="match status" value="1"/>
</dbReference>
<feature type="chain" id="PRO_0000358453" description="NAD(P)H-quinone oxidoreductase subunit K">
    <location>
        <begin position="1"/>
        <end position="250"/>
    </location>
</feature>
<feature type="region of interest" description="Disordered" evidence="2">
    <location>
        <begin position="230"/>
        <end position="250"/>
    </location>
</feature>
<feature type="compositionally biased region" description="Polar residues" evidence="2">
    <location>
        <begin position="231"/>
        <end position="250"/>
    </location>
</feature>
<feature type="binding site" evidence="1">
    <location>
        <position position="60"/>
    </location>
    <ligand>
        <name>[4Fe-4S] cluster</name>
        <dbReference type="ChEBI" id="CHEBI:49883"/>
    </ligand>
</feature>
<feature type="binding site" evidence="1">
    <location>
        <position position="61"/>
    </location>
    <ligand>
        <name>[4Fe-4S] cluster</name>
        <dbReference type="ChEBI" id="CHEBI:49883"/>
    </ligand>
</feature>
<feature type="binding site" evidence="1">
    <location>
        <position position="125"/>
    </location>
    <ligand>
        <name>[4Fe-4S] cluster</name>
        <dbReference type="ChEBI" id="CHEBI:49883"/>
    </ligand>
</feature>
<feature type="binding site" evidence="1">
    <location>
        <position position="156"/>
    </location>
    <ligand>
        <name>[4Fe-4S] cluster</name>
        <dbReference type="ChEBI" id="CHEBI:49883"/>
    </ligand>
</feature>
<organism>
    <name type="scientific">Prochlorococcus marinus (strain MIT 9303)</name>
    <dbReference type="NCBI Taxonomy" id="59922"/>
    <lineage>
        <taxon>Bacteria</taxon>
        <taxon>Bacillati</taxon>
        <taxon>Cyanobacteriota</taxon>
        <taxon>Cyanophyceae</taxon>
        <taxon>Synechococcales</taxon>
        <taxon>Prochlorococcaceae</taxon>
        <taxon>Prochlorococcus</taxon>
    </lineage>
</organism>